<comment type="induction">
    <text evidence="1">By elevated hydrostatic pressure.</text>
</comment>
<comment type="miscellaneous">
    <text evidence="1">On the 2D-gel the determined MW of this unknown protein is: 65 kDa.</text>
</comment>
<protein>
    <recommendedName>
        <fullName>Unknown protein 8 from 2D-PAGE</fullName>
    </recommendedName>
</protein>
<sequence length="10" mass="1183">PYLLNLPPEK</sequence>
<accession>P83538</accession>
<keyword id="KW-0903">Direct protein sequencing</keyword>
<organism>
    <name type="scientific">Fructilactobacillus sanfranciscensis</name>
    <name type="common">Lactobacillus sanfranciscensis</name>
    <dbReference type="NCBI Taxonomy" id="1625"/>
    <lineage>
        <taxon>Bacteria</taxon>
        <taxon>Bacillati</taxon>
        <taxon>Bacillota</taxon>
        <taxon>Bacilli</taxon>
        <taxon>Lactobacillales</taxon>
        <taxon>Lactobacillaceae</taxon>
        <taxon>Fructilactobacillus</taxon>
    </lineage>
</organism>
<evidence type="ECO:0000269" key="1">
    <source>
    </source>
</evidence>
<evidence type="ECO:0000303" key="2">
    <source>
    </source>
</evidence>
<evidence type="ECO:0000305" key="3"/>
<proteinExistence type="evidence at protein level"/>
<reference evidence="3" key="1">
    <citation type="journal article" date="2002" name="Proteomics">
        <title>High pressure effects step-wise altered protein expression in Lactobacillus sanfranciscensis.</title>
        <authorList>
            <person name="Drews O."/>
            <person name="Weiss W."/>
            <person name="Reil G."/>
            <person name="Parlar H."/>
            <person name="Wait R."/>
            <person name="Goerg A."/>
        </authorList>
    </citation>
    <scope>PROTEIN SEQUENCE</scope>
    <scope>INDUCTION</scope>
    <source>
        <strain evidence="1">ATCC 27651 / DSM 20451 / JCM 5668 / KCTC 3205 / NCIMB 702811 / NRRL B-3934 / L-12</strain>
    </source>
</reference>
<name>UP08_FRUSA</name>
<feature type="chain" id="PRO_0000285979" description="Unknown protein 8 from 2D-PAGE">
    <location>
        <begin position="1" status="less than"/>
        <end position="10" status="greater than"/>
    </location>
</feature>
<feature type="non-terminal residue" evidence="2">
    <location>
        <position position="1"/>
    </location>
</feature>
<feature type="non-terminal residue" evidence="2">
    <location>
        <position position="10"/>
    </location>
</feature>